<name>VDLC_HELPJ</name>
<evidence type="ECO:0000250" key="1"/>
<evidence type="ECO:0000255" key="2">
    <source>
        <dbReference type="PROSITE-ProRule" id="PRU10001"/>
    </source>
</evidence>
<evidence type="ECO:0000305" key="3"/>
<reference key="1">
    <citation type="journal article" date="1999" name="Nature">
        <title>Genomic sequence comparison of two unrelated isolates of the human gastric pathogen Helicobacter pylori.</title>
        <authorList>
            <person name="Alm R.A."/>
            <person name="Ling L.-S.L."/>
            <person name="Moir D.T."/>
            <person name="King B.L."/>
            <person name="Brown E.D."/>
            <person name="Doig P.C."/>
            <person name="Smith D.R."/>
            <person name="Noonan B."/>
            <person name="Guild B.C."/>
            <person name="deJonge B.L."/>
            <person name="Carmel G."/>
            <person name="Tummino P.J."/>
            <person name="Caruso A."/>
            <person name="Uria-Nickelsen M."/>
            <person name="Mills D.M."/>
            <person name="Ives C."/>
            <person name="Gibson R."/>
            <person name="Merberg D."/>
            <person name="Mills S.D."/>
            <person name="Jiang Q."/>
            <person name="Taylor D.E."/>
            <person name="Vovis G.F."/>
            <person name="Trust T.J."/>
        </authorList>
    </citation>
    <scope>NUCLEOTIDE SEQUENCE [LARGE SCALE GENOMIC DNA]</scope>
    <source>
        <strain>J99 / ATCC 700824</strain>
    </source>
</reference>
<feature type="chain" id="PRO_0000054806" description="Probable short-chain type dehydrogenase/reductase VdlC">
    <location>
        <begin position="1"/>
        <end position="271"/>
    </location>
</feature>
<feature type="active site" description="Proton acceptor" evidence="2">
    <location>
        <position position="142"/>
    </location>
</feature>
<feature type="binding site" evidence="1">
    <location>
        <begin position="1"/>
        <end position="25"/>
    </location>
    <ligand>
        <name>NAD(+)</name>
        <dbReference type="ChEBI" id="CHEBI:57540"/>
    </ligand>
</feature>
<feature type="binding site" evidence="1">
    <location>
        <position position="129"/>
    </location>
    <ligand>
        <name>substrate</name>
    </ligand>
</feature>
<gene>
    <name type="primary">vdlC</name>
    <name type="ordered locus">jhp_0823</name>
</gene>
<comment type="similarity">
    <text evidence="3">Belongs to the short-chain dehydrogenases/reductases (SDR) family.</text>
</comment>
<proteinExistence type="inferred from homology"/>
<keyword id="KW-0560">Oxidoreductase</keyword>
<protein>
    <recommendedName>
        <fullName>Probable short-chain type dehydrogenase/reductase VdlC</fullName>
        <ecNumber>1.-.-.-</ecNumber>
    </recommendedName>
</protein>
<accession>Q9ZKW1</accession>
<dbReference type="EC" id="1.-.-.-"/>
<dbReference type="EMBL" id="AE001439">
    <property type="protein sequence ID" value="AAD06395.1"/>
    <property type="molecule type" value="Genomic_DNA"/>
</dbReference>
<dbReference type="PIR" id="A71885">
    <property type="entry name" value="A71885"/>
</dbReference>
<dbReference type="SMR" id="Q9ZKW1"/>
<dbReference type="KEGG" id="hpj:jhp_0823"/>
<dbReference type="eggNOG" id="COG0300">
    <property type="taxonomic scope" value="Bacteria"/>
</dbReference>
<dbReference type="Proteomes" id="UP000000804">
    <property type="component" value="Chromosome"/>
</dbReference>
<dbReference type="GO" id="GO:0016491">
    <property type="term" value="F:oxidoreductase activity"/>
    <property type="evidence" value="ECO:0007669"/>
    <property type="project" value="UniProtKB-KW"/>
</dbReference>
<dbReference type="CDD" id="cd05374">
    <property type="entry name" value="17beta-HSD-like_SDR_c"/>
    <property type="match status" value="1"/>
</dbReference>
<dbReference type="Gene3D" id="3.40.50.720">
    <property type="entry name" value="NAD(P)-binding Rossmann-like Domain"/>
    <property type="match status" value="1"/>
</dbReference>
<dbReference type="InterPro" id="IPR036291">
    <property type="entry name" value="NAD(P)-bd_dom_sf"/>
</dbReference>
<dbReference type="InterPro" id="IPR020904">
    <property type="entry name" value="Sc_DH/Rdtase_CS"/>
</dbReference>
<dbReference type="InterPro" id="IPR002347">
    <property type="entry name" value="SDR_fam"/>
</dbReference>
<dbReference type="PANTHER" id="PTHR44169">
    <property type="entry name" value="NADPH-DEPENDENT 1-ACYLDIHYDROXYACETONE PHOSPHATE REDUCTASE"/>
    <property type="match status" value="1"/>
</dbReference>
<dbReference type="PANTHER" id="PTHR44169:SF6">
    <property type="entry name" value="NADPH-DEPENDENT 1-ACYLDIHYDROXYACETONE PHOSPHATE REDUCTASE"/>
    <property type="match status" value="1"/>
</dbReference>
<dbReference type="Pfam" id="PF00106">
    <property type="entry name" value="adh_short"/>
    <property type="match status" value="1"/>
</dbReference>
<dbReference type="PRINTS" id="PR00081">
    <property type="entry name" value="GDHRDH"/>
</dbReference>
<dbReference type="PRINTS" id="PR00080">
    <property type="entry name" value="SDRFAMILY"/>
</dbReference>
<dbReference type="SUPFAM" id="SSF51735">
    <property type="entry name" value="NAD(P)-binding Rossmann-fold domains"/>
    <property type="match status" value="1"/>
</dbReference>
<dbReference type="PROSITE" id="PS00061">
    <property type="entry name" value="ADH_SHORT"/>
    <property type="match status" value="1"/>
</dbReference>
<sequence>MAVITGASSGIGLECVLMLLNQGYKVYALSRHATLCVALNHALCECVDIDVSDSNALKEVFLNISAKEDHCDVLINSAGYGVFGSVEDTPIEEVKKQFSVNFFALCEVVQLCLPLLKNKPYSKIFNLSSIAGRVSMLFLGHYSASKHALEAYSDALRLELKPFNVQVCLIEPGPVKSNWEKTAFENDERKDSVYALEVNAAKSFYSGVYQKALNAKEVAQKIVFLSMSHKIKARYLIGLKTQLLLALYQILPSSWYDSLFRLVVLGRKRDA</sequence>
<organism>
    <name type="scientific">Helicobacter pylori (strain J99 / ATCC 700824)</name>
    <name type="common">Campylobacter pylori J99</name>
    <dbReference type="NCBI Taxonomy" id="85963"/>
    <lineage>
        <taxon>Bacteria</taxon>
        <taxon>Pseudomonadati</taxon>
        <taxon>Campylobacterota</taxon>
        <taxon>Epsilonproteobacteria</taxon>
        <taxon>Campylobacterales</taxon>
        <taxon>Helicobacteraceae</taxon>
        <taxon>Helicobacter</taxon>
    </lineage>
</organism>